<proteinExistence type="inferred from homology"/>
<evidence type="ECO:0000255" key="1">
    <source>
        <dbReference type="HAMAP-Rule" id="MF_01363"/>
    </source>
</evidence>
<evidence type="ECO:0000305" key="2"/>
<feature type="chain" id="PRO_1000086996" description="Large ribosomal subunit protein bL21">
    <location>
        <begin position="1"/>
        <end position="103"/>
    </location>
</feature>
<sequence>MYAVFQSGGKQHRVSEGQTVRLEKLDIATGETIEFAEVLMIANGEEVKIGVPFVDGGVIKAEVVAHGRGEKVKIVKFRRRKHYRKQQGHRQWFTDVKITGISA</sequence>
<reference key="1">
    <citation type="submission" date="2007-11" db="EMBL/GenBank/DDBJ databases">
        <authorList>
            <consortium name="The Salmonella enterica serovar Paratyphi B Genome Sequencing Project"/>
            <person name="McClelland M."/>
            <person name="Sanderson E.K."/>
            <person name="Porwollik S."/>
            <person name="Spieth J."/>
            <person name="Clifton W.S."/>
            <person name="Fulton R."/>
            <person name="Cordes M."/>
            <person name="Wollam A."/>
            <person name="Shah N."/>
            <person name="Pepin K."/>
            <person name="Bhonagiri V."/>
            <person name="Nash W."/>
            <person name="Johnson M."/>
            <person name="Thiruvilangam P."/>
            <person name="Wilson R."/>
        </authorList>
    </citation>
    <scope>NUCLEOTIDE SEQUENCE [LARGE SCALE GENOMIC DNA]</scope>
    <source>
        <strain>ATCC BAA-1250 / SPB7</strain>
    </source>
</reference>
<gene>
    <name evidence="1" type="primary">rplU</name>
    <name type="ordered locus">SPAB_04121</name>
</gene>
<accession>A9N753</accession>
<protein>
    <recommendedName>
        <fullName evidence="1">Large ribosomal subunit protein bL21</fullName>
    </recommendedName>
    <alternativeName>
        <fullName evidence="2">50S ribosomal protein L21</fullName>
    </alternativeName>
</protein>
<dbReference type="EMBL" id="CP000886">
    <property type="protein sequence ID" value="ABX69445.1"/>
    <property type="molecule type" value="Genomic_DNA"/>
</dbReference>
<dbReference type="RefSeq" id="WP_000271396.1">
    <property type="nucleotide sequence ID" value="NC_010102.1"/>
</dbReference>
<dbReference type="SMR" id="A9N753"/>
<dbReference type="GeneID" id="66757643"/>
<dbReference type="KEGG" id="spq:SPAB_04121"/>
<dbReference type="PATRIC" id="fig|1016998.12.peg.3881"/>
<dbReference type="HOGENOM" id="CLU_061463_3_3_6"/>
<dbReference type="BioCyc" id="SENT1016998:SPAB_RS16745-MONOMER"/>
<dbReference type="Proteomes" id="UP000008556">
    <property type="component" value="Chromosome"/>
</dbReference>
<dbReference type="GO" id="GO:0005737">
    <property type="term" value="C:cytoplasm"/>
    <property type="evidence" value="ECO:0007669"/>
    <property type="project" value="UniProtKB-ARBA"/>
</dbReference>
<dbReference type="GO" id="GO:1990904">
    <property type="term" value="C:ribonucleoprotein complex"/>
    <property type="evidence" value="ECO:0007669"/>
    <property type="project" value="UniProtKB-KW"/>
</dbReference>
<dbReference type="GO" id="GO:0005840">
    <property type="term" value="C:ribosome"/>
    <property type="evidence" value="ECO:0007669"/>
    <property type="project" value="UniProtKB-KW"/>
</dbReference>
<dbReference type="GO" id="GO:0019843">
    <property type="term" value="F:rRNA binding"/>
    <property type="evidence" value="ECO:0007669"/>
    <property type="project" value="UniProtKB-UniRule"/>
</dbReference>
<dbReference type="GO" id="GO:0003735">
    <property type="term" value="F:structural constituent of ribosome"/>
    <property type="evidence" value="ECO:0007669"/>
    <property type="project" value="InterPro"/>
</dbReference>
<dbReference type="GO" id="GO:0006412">
    <property type="term" value="P:translation"/>
    <property type="evidence" value="ECO:0007669"/>
    <property type="project" value="UniProtKB-UniRule"/>
</dbReference>
<dbReference type="HAMAP" id="MF_01363">
    <property type="entry name" value="Ribosomal_bL21"/>
    <property type="match status" value="1"/>
</dbReference>
<dbReference type="InterPro" id="IPR028909">
    <property type="entry name" value="bL21-like"/>
</dbReference>
<dbReference type="InterPro" id="IPR036164">
    <property type="entry name" value="bL21-like_sf"/>
</dbReference>
<dbReference type="InterPro" id="IPR001787">
    <property type="entry name" value="Ribosomal_bL21"/>
</dbReference>
<dbReference type="InterPro" id="IPR018258">
    <property type="entry name" value="Ribosomal_bL21_CS"/>
</dbReference>
<dbReference type="NCBIfam" id="TIGR00061">
    <property type="entry name" value="L21"/>
    <property type="match status" value="1"/>
</dbReference>
<dbReference type="PANTHER" id="PTHR21349">
    <property type="entry name" value="50S RIBOSOMAL PROTEIN L21"/>
    <property type="match status" value="1"/>
</dbReference>
<dbReference type="PANTHER" id="PTHR21349:SF0">
    <property type="entry name" value="LARGE RIBOSOMAL SUBUNIT PROTEIN BL21M"/>
    <property type="match status" value="1"/>
</dbReference>
<dbReference type="Pfam" id="PF00829">
    <property type="entry name" value="Ribosomal_L21p"/>
    <property type="match status" value="1"/>
</dbReference>
<dbReference type="SUPFAM" id="SSF141091">
    <property type="entry name" value="L21p-like"/>
    <property type="match status" value="1"/>
</dbReference>
<dbReference type="PROSITE" id="PS01169">
    <property type="entry name" value="RIBOSOMAL_L21"/>
    <property type="match status" value="1"/>
</dbReference>
<keyword id="KW-0687">Ribonucleoprotein</keyword>
<keyword id="KW-0689">Ribosomal protein</keyword>
<keyword id="KW-0694">RNA-binding</keyword>
<keyword id="KW-0699">rRNA-binding</keyword>
<name>RL21_SALPB</name>
<comment type="function">
    <text evidence="1">This protein binds to 23S rRNA in the presence of protein L20.</text>
</comment>
<comment type="subunit">
    <text evidence="1">Part of the 50S ribosomal subunit. Contacts protein L20.</text>
</comment>
<comment type="similarity">
    <text evidence="1">Belongs to the bacterial ribosomal protein bL21 family.</text>
</comment>
<organism>
    <name type="scientific">Salmonella paratyphi B (strain ATCC BAA-1250 / SPB7)</name>
    <dbReference type="NCBI Taxonomy" id="1016998"/>
    <lineage>
        <taxon>Bacteria</taxon>
        <taxon>Pseudomonadati</taxon>
        <taxon>Pseudomonadota</taxon>
        <taxon>Gammaproteobacteria</taxon>
        <taxon>Enterobacterales</taxon>
        <taxon>Enterobacteriaceae</taxon>
        <taxon>Salmonella</taxon>
    </lineage>
</organism>